<accession>P13327</accession>
<feature type="chain" id="PRO_0000165101" description="Uncharacterized 7.9 kDa protein in mobB-Gp55 intergenic region">
    <location>
        <begin position="1"/>
        <end position="67"/>
    </location>
</feature>
<protein>
    <recommendedName>
        <fullName>Uncharacterized 7.9 kDa protein in mobB-Gp55 intergenic region</fullName>
    </recommendedName>
    <alternativeName>
        <fullName>ORF B</fullName>
    </alternativeName>
</protein>
<reference key="1">
    <citation type="journal article" date="1985" name="EMBO J.">
        <title>Genes 55, alpha gt, 47 and 46 of bacteriophage T4: the genomic organization as deduced by sequence analysis.</title>
        <authorList>
            <person name="Gram H."/>
            <person name="Rueger W."/>
        </authorList>
    </citation>
    <scope>NUCLEOTIDE SEQUENCE [GENOMIC DNA]</scope>
</reference>
<reference key="2">
    <citation type="journal article" date="2003" name="Microbiol. Mol. Biol. Rev.">
        <title>Bacteriophage T4 genome.</title>
        <authorList>
            <person name="Miller E.S."/>
            <person name="Kutter E."/>
            <person name="Mosig G."/>
            <person name="Arisaka F."/>
            <person name="Kunisawa T."/>
            <person name="Ruger W."/>
        </authorList>
    </citation>
    <scope>NUCLEOTIDE SEQUENCE [LARGE SCALE GENOMIC DNA]</scope>
</reference>
<gene>
    <name type="primary">y03G</name>
    <name type="synonym">agt.3</name>
</gene>
<organismHost>
    <name type="scientific">Escherichia coli</name>
    <dbReference type="NCBI Taxonomy" id="562"/>
</organismHost>
<dbReference type="EMBL" id="X01804">
    <property type="protein sequence ID" value="CAA25936.1"/>
    <property type="molecule type" value="Genomic_DNA"/>
</dbReference>
<dbReference type="EMBL" id="AF158101">
    <property type="protein sequence ID" value="AAD42529.1"/>
    <property type="molecule type" value="Genomic_DNA"/>
</dbReference>
<dbReference type="PIR" id="T10153">
    <property type="entry name" value="T10153"/>
</dbReference>
<dbReference type="KEGG" id="vg:1258815"/>
<dbReference type="OrthoDB" id="22437at10239"/>
<dbReference type="Proteomes" id="UP000009087">
    <property type="component" value="Segment"/>
</dbReference>
<keyword id="KW-1185">Reference proteome</keyword>
<proteinExistence type="predicted"/>
<name>Y03G_BPT4</name>
<organism>
    <name type="scientific">Enterobacteria phage T4</name>
    <name type="common">Bacteriophage T4</name>
    <dbReference type="NCBI Taxonomy" id="10665"/>
    <lineage>
        <taxon>Viruses</taxon>
        <taxon>Duplodnaviria</taxon>
        <taxon>Heunggongvirae</taxon>
        <taxon>Uroviricota</taxon>
        <taxon>Caudoviricetes</taxon>
        <taxon>Straboviridae</taxon>
        <taxon>Tevenvirinae</taxon>
        <taxon>Tequatrovirus</taxon>
    </lineage>
</organism>
<sequence>MLTHVKFKRLKINAGFTESLNGHLCVKISEKEYRDSSIKEVNPPIVRADPNMKVWVDSYQVKKWWQL</sequence>